<dbReference type="EMBL" id="AC103710">
    <property type="status" value="NOT_ANNOTATED_CDS"/>
    <property type="molecule type" value="Genomic_DNA"/>
</dbReference>
<dbReference type="CCDS" id="CCDS31359.1"/>
<dbReference type="RefSeq" id="NP_001004752.2">
    <property type="nucleotide sequence ID" value="NM_001004752.2"/>
</dbReference>
<dbReference type="SMR" id="A6NGY5"/>
<dbReference type="FunCoup" id="A6NGY5">
    <property type="interactions" value="461"/>
</dbReference>
<dbReference type="STRING" id="9606.ENSP00000369744"/>
<dbReference type="GlyGen" id="A6NGY5">
    <property type="glycosylation" value="1 site, 1 O-linked glycan (1 site)"/>
</dbReference>
<dbReference type="iPTMnet" id="A6NGY5"/>
<dbReference type="PhosphoSitePlus" id="A6NGY5"/>
<dbReference type="BioMuta" id="OR51F1"/>
<dbReference type="PaxDb" id="9606-ENSP00000345163"/>
<dbReference type="PeptideAtlas" id="A6NGY5"/>
<dbReference type="Antibodypedia" id="78531">
    <property type="antibodies" value="37 antibodies from 11 providers"/>
</dbReference>
<dbReference type="Ensembl" id="ENST00000624103.2">
    <property type="protein sequence ID" value="ENSP00000485387.2"/>
    <property type="gene ID" value="ENSG00000280021.3"/>
</dbReference>
<dbReference type="GeneID" id="256892"/>
<dbReference type="MANE-Select" id="ENST00000624103.2">
    <property type="protein sequence ID" value="ENSP00000485387.2"/>
    <property type="RefSeq nucleotide sequence ID" value="NM_001004752.2"/>
    <property type="RefSeq protein sequence ID" value="NP_001004752.2"/>
</dbReference>
<dbReference type="UCSC" id="uc057ygl.1">
    <property type="organism name" value="human"/>
</dbReference>
<dbReference type="AGR" id="HGNC:15196"/>
<dbReference type="GeneCards" id="OR51F1"/>
<dbReference type="HGNC" id="HGNC:15196">
    <property type="gene designation" value="OR51F1"/>
</dbReference>
<dbReference type="HPA" id="ENSG00000280021">
    <property type="expression patterns" value="Not detected"/>
</dbReference>
<dbReference type="neXtProt" id="NX_A6NGY5"/>
<dbReference type="OpenTargets" id="ENSG00000280021"/>
<dbReference type="VEuPathDB" id="HostDB:ENSG00000280021"/>
<dbReference type="eggNOG" id="ENOG502SMHX">
    <property type="taxonomic scope" value="Eukaryota"/>
</dbReference>
<dbReference type="InParanoid" id="A6NGY5"/>
<dbReference type="OMA" id="MLQNQDT"/>
<dbReference type="PAN-GO" id="A6NGY5">
    <property type="GO annotations" value="2 GO annotations based on evolutionary models"/>
</dbReference>
<dbReference type="PhylomeDB" id="A6NGY5"/>
<dbReference type="PathwayCommons" id="A6NGY5"/>
<dbReference type="Reactome" id="R-HSA-9752946">
    <property type="pathway name" value="Expression and translocation of olfactory receptors"/>
</dbReference>
<dbReference type="Pharos" id="A6NGY5">
    <property type="development level" value="Tdark"/>
</dbReference>
<dbReference type="PRO" id="PR:A6NGY5"/>
<dbReference type="Proteomes" id="UP000005640">
    <property type="component" value="Chromosome 11"/>
</dbReference>
<dbReference type="RNAct" id="A6NGY5">
    <property type="molecule type" value="protein"/>
</dbReference>
<dbReference type="GO" id="GO:0005886">
    <property type="term" value="C:plasma membrane"/>
    <property type="evidence" value="ECO:0000318"/>
    <property type="project" value="GO_Central"/>
</dbReference>
<dbReference type="GO" id="GO:0004930">
    <property type="term" value="F:G protein-coupled receptor activity"/>
    <property type="evidence" value="ECO:0007669"/>
    <property type="project" value="UniProtKB-KW"/>
</dbReference>
<dbReference type="GO" id="GO:0004984">
    <property type="term" value="F:olfactory receptor activity"/>
    <property type="evidence" value="ECO:0000318"/>
    <property type="project" value="GO_Central"/>
</dbReference>
<dbReference type="CDD" id="cd15222">
    <property type="entry name" value="7tmA_OR51-like"/>
    <property type="match status" value="1"/>
</dbReference>
<dbReference type="FunFam" id="1.20.1070.10:FF:000002">
    <property type="entry name" value="Olfactory receptor"/>
    <property type="match status" value="1"/>
</dbReference>
<dbReference type="Gene3D" id="1.20.1070.10">
    <property type="entry name" value="Rhodopsin 7-helix transmembrane proteins"/>
    <property type="match status" value="1"/>
</dbReference>
<dbReference type="InterPro" id="IPR000276">
    <property type="entry name" value="GPCR_Rhodpsn"/>
</dbReference>
<dbReference type="InterPro" id="IPR017452">
    <property type="entry name" value="GPCR_Rhodpsn_7TM"/>
</dbReference>
<dbReference type="InterPro" id="IPR000725">
    <property type="entry name" value="Olfact_rcpt"/>
</dbReference>
<dbReference type="InterPro" id="IPR050402">
    <property type="entry name" value="OR51/52/56-like"/>
</dbReference>
<dbReference type="PANTHER" id="PTHR26450:SF46">
    <property type="entry name" value="OLFACTORY RECEPTOR 51F1"/>
    <property type="match status" value="1"/>
</dbReference>
<dbReference type="PANTHER" id="PTHR26450">
    <property type="entry name" value="OLFACTORY RECEPTOR 56B1-RELATED"/>
    <property type="match status" value="1"/>
</dbReference>
<dbReference type="Pfam" id="PF13853">
    <property type="entry name" value="7tm_4"/>
    <property type="match status" value="1"/>
</dbReference>
<dbReference type="PRINTS" id="PR00237">
    <property type="entry name" value="GPCRRHODOPSN"/>
</dbReference>
<dbReference type="PRINTS" id="PR00245">
    <property type="entry name" value="OLFACTORYR"/>
</dbReference>
<dbReference type="SUPFAM" id="SSF81321">
    <property type="entry name" value="Family A G protein-coupled receptor-like"/>
    <property type="match status" value="1"/>
</dbReference>
<dbReference type="PROSITE" id="PS00237">
    <property type="entry name" value="G_PROTEIN_RECEP_F1_1"/>
    <property type="match status" value="1"/>
</dbReference>
<dbReference type="PROSITE" id="PS50262">
    <property type="entry name" value="G_PROTEIN_RECEP_F1_2"/>
    <property type="match status" value="1"/>
</dbReference>
<protein>
    <recommendedName>
        <fullName>Olfactory receptor 51F1</fullName>
    </recommendedName>
</protein>
<organism>
    <name type="scientific">Homo sapiens</name>
    <name type="common">Human</name>
    <dbReference type="NCBI Taxonomy" id="9606"/>
    <lineage>
        <taxon>Eukaryota</taxon>
        <taxon>Metazoa</taxon>
        <taxon>Chordata</taxon>
        <taxon>Craniata</taxon>
        <taxon>Vertebrata</taxon>
        <taxon>Euteleostomi</taxon>
        <taxon>Mammalia</taxon>
        <taxon>Eutheria</taxon>
        <taxon>Euarchontoglires</taxon>
        <taxon>Primates</taxon>
        <taxon>Haplorrhini</taxon>
        <taxon>Catarrhini</taxon>
        <taxon>Hominidae</taxon>
        <taxon>Homo</taxon>
    </lineage>
</organism>
<reference key="1">
    <citation type="journal article" date="2006" name="Nature">
        <title>Human chromosome 11 DNA sequence and analysis including novel gene identification.</title>
        <authorList>
            <person name="Taylor T.D."/>
            <person name="Noguchi H."/>
            <person name="Totoki Y."/>
            <person name="Toyoda A."/>
            <person name="Kuroki Y."/>
            <person name="Dewar K."/>
            <person name="Lloyd C."/>
            <person name="Itoh T."/>
            <person name="Takeda T."/>
            <person name="Kim D.-W."/>
            <person name="She X."/>
            <person name="Barlow K.F."/>
            <person name="Bloom T."/>
            <person name="Bruford E."/>
            <person name="Chang J.L."/>
            <person name="Cuomo C.A."/>
            <person name="Eichler E."/>
            <person name="FitzGerald M.G."/>
            <person name="Jaffe D.B."/>
            <person name="LaButti K."/>
            <person name="Nicol R."/>
            <person name="Park H.-S."/>
            <person name="Seaman C."/>
            <person name="Sougnez C."/>
            <person name="Yang X."/>
            <person name="Zimmer A.R."/>
            <person name="Zody M.C."/>
            <person name="Birren B.W."/>
            <person name="Nusbaum C."/>
            <person name="Fujiyama A."/>
            <person name="Hattori M."/>
            <person name="Rogers J."/>
            <person name="Lander E.S."/>
            <person name="Sakaki Y."/>
        </authorList>
    </citation>
    <scope>NUCLEOTIDE SEQUENCE [LARGE SCALE GENOMIC DNA]</scope>
</reference>
<reference key="2">
    <citation type="journal article" date="2003" name="Nat. Genet.">
        <title>Different noses for different people.</title>
        <authorList>
            <person name="Menashe I."/>
            <person name="Man O."/>
            <person name="Lancet D."/>
            <person name="Gilad Y."/>
        </authorList>
    </citation>
    <scope>POLYMORPHISM</scope>
</reference>
<name>O51F1_HUMAN</name>
<gene>
    <name type="primary">OR51F1</name>
    <name type="synonym">OR51F1P</name>
</gene>
<comment type="function">
    <text evidence="3">Odorant receptor.</text>
</comment>
<comment type="subcellular location">
    <subcellularLocation>
        <location>Cell membrane</location>
        <topology>Multi-pass membrane protein</topology>
    </subcellularLocation>
</comment>
<comment type="polymorphism">
    <text>A single nucleotide deletion at position Arg-92 in the gene coding for this protein is responsible for functional diversity thus producing a pseudogene. The deletion is more frequent in African-Americans than in non-Africans.</text>
</comment>
<comment type="similarity">
    <text evidence="2">Belongs to the G-protein coupled receptor 1 family.</text>
</comment>
<comment type="online information" name="Human Olfactory Receptor Data Exploratorium (HORDE)">
    <link uri="http://genome.weizmann.ac.il/horde/card/index/symbol:OR51F1"/>
</comment>
<keyword id="KW-1003">Cell membrane</keyword>
<keyword id="KW-1015">Disulfide bond</keyword>
<keyword id="KW-0297">G-protein coupled receptor</keyword>
<keyword id="KW-0472">Membrane</keyword>
<keyword id="KW-0552">Olfaction</keyword>
<keyword id="KW-0675">Receptor</keyword>
<keyword id="KW-1185">Reference proteome</keyword>
<keyword id="KW-0716">Sensory transduction</keyword>
<keyword id="KW-0807">Transducer</keyword>
<keyword id="KW-0812">Transmembrane</keyword>
<keyword id="KW-1133">Transmembrane helix</keyword>
<evidence type="ECO:0000255" key="1"/>
<evidence type="ECO:0000255" key="2">
    <source>
        <dbReference type="PROSITE-ProRule" id="PRU00521"/>
    </source>
</evidence>
<evidence type="ECO:0000305" key="3"/>
<sequence>MLQNQDTMEILSNSTSKFPTFLLTGIPGLESAHVWISIPFCCFYAIALSGNSVILFVIITQQSLHEPMYYFLFRLSATDLGLTVSSLSTTLGILWFEAREISLYSCIVQMFFLHGFTFMESGVLVATAFDRYVAICDPLRYTTILTNSRIIQMGLLMITRAIVLILPLLLLLKPLYFCRMNALSHSYCYHPDVIQLACSDIRANSICGLIDLILTTGIDTPCIVLSYILIIHSVLRIASPEEWHKVFSTCVSHVGAVAFFYIHMLSLSLVYRYGRSAPRVVHSVMANVYLLLPPVLNPIIDSVKTKQIRKAMLSLLLTK</sequence>
<proteinExistence type="inferred from homology"/>
<accession>A6NGY5</accession>
<feature type="chain" id="PRO_0000312489" description="Olfactory receptor 51F1">
    <location>
        <begin position="1"/>
        <end position="319"/>
    </location>
</feature>
<feature type="topological domain" description="Extracellular" evidence="1">
    <location>
        <begin position="1"/>
        <end position="37"/>
    </location>
</feature>
<feature type="transmembrane region" description="Helical; Name=1" evidence="1">
    <location>
        <begin position="38"/>
        <end position="58"/>
    </location>
</feature>
<feature type="topological domain" description="Cytoplasmic" evidence="1">
    <location>
        <begin position="59"/>
        <end position="75"/>
    </location>
</feature>
<feature type="transmembrane region" description="Helical; Name=2" evidence="1">
    <location>
        <begin position="76"/>
        <end position="96"/>
    </location>
</feature>
<feature type="topological domain" description="Extracellular" evidence="1">
    <location>
        <begin position="97"/>
        <end position="106"/>
    </location>
</feature>
<feature type="transmembrane region" description="Helical; Name=3" evidence="1">
    <location>
        <begin position="107"/>
        <end position="127"/>
    </location>
</feature>
<feature type="topological domain" description="Cytoplasmic" evidence="1">
    <location>
        <begin position="128"/>
        <end position="149"/>
    </location>
</feature>
<feature type="transmembrane region" description="Helical; Name=4" evidence="1">
    <location>
        <begin position="150"/>
        <end position="170"/>
    </location>
</feature>
<feature type="topological domain" description="Extracellular" evidence="1">
    <location>
        <begin position="171"/>
        <end position="211"/>
    </location>
</feature>
<feature type="transmembrane region" description="Helical; Name=5" evidence="1">
    <location>
        <begin position="212"/>
        <end position="232"/>
    </location>
</feature>
<feature type="topological domain" description="Cytoplasmic" evidence="1">
    <location>
        <begin position="233"/>
        <end position="249"/>
    </location>
</feature>
<feature type="transmembrane region" description="Helical; Name=6" evidence="1">
    <location>
        <begin position="250"/>
        <end position="270"/>
    </location>
</feature>
<feature type="topological domain" description="Extracellular" evidence="1">
    <location>
        <begin position="271"/>
        <end position="279"/>
    </location>
</feature>
<feature type="transmembrane region" description="Helical; Name=7" evidence="1">
    <location>
        <begin position="280"/>
        <end position="300"/>
    </location>
</feature>
<feature type="topological domain" description="Cytoplasmic" evidence="1">
    <location>
        <begin position="301"/>
        <end position="319"/>
    </location>
</feature>
<feature type="disulfide bond" evidence="2">
    <location>
        <begin position="106"/>
        <end position="188"/>
    </location>
</feature>
<feature type="sequence variant" id="VAR_037506" description="In dbSNP:rs17324812.">
    <original>T</original>
    <variation>A</variation>
    <location>
        <position position="20"/>
    </location>
</feature>
<feature type="sequence variant" id="VAR_037507" description="In dbSNP:rs11033801.">
    <original>F</original>
    <variation>S</variation>
    <location>
        <position position="73"/>
    </location>
</feature>
<feature type="sequence variant" id="VAR_037508" description="In dbSNP:rs11033800.">
    <original>R</original>
    <variation>M</variation>
    <location>
        <position position="74"/>
    </location>
</feature>
<feature type="sequence variant" id="VAR_057578" description="In dbSNP:rs16938368.">
    <original>R</original>
    <variation>Q</variation>
    <location>
        <position position="202"/>
    </location>
</feature>
<feature type="sequence variant" id="VAR_037509" description="In dbSNP:rs11033793.">
    <original>H</original>
    <variation>R</variation>
    <location>
        <position position="232"/>
    </location>
</feature>
<feature type="sequence variant" id="VAR_060037" description="In dbSNP:rs1030723.">
    <original>S</original>
    <variation>F</variation>
    <location>
        <position position="233"/>
    </location>
</feature>
<feature type="sequence variant" id="VAR_057579" description="In dbSNP:rs17324609.">
    <original>A</original>
    <variation>V</variation>
    <location>
        <position position="258"/>
    </location>
</feature>
<feature type="sequence variant" id="VAR_037510" description="In dbSNP:rs1030726.">
    <original>D</original>
    <variation>Y</variation>
    <location>
        <position position="301"/>
    </location>
</feature>